<gene>
    <name type="ordered locus">CE0119</name>
</gene>
<protein>
    <recommendedName>
        <fullName evidence="1">Putative 3-methyladenine DNA glycosylase</fullName>
        <ecNumber evidence="1">3.2.2.-</ecNumber>
    </recommendedName>
</protein>
<dbReference type="EC" id="3.2.2.-" evidence="1"/>
<dbReference type="EMBL" id="BA000035">
    <property type="protein sequence ID" value="BAC16929.1"/>
    <property type="status" value="ALT_INIT"/>
    <property type="molecule type" value="Genomic_DNA"/>
</dbReference>
<dbReference type="RefSeq" id="WP_006768574.1">
    <property type="nucleotide sequence ID" value="NC_004369.1"/>
</dbReference>
<dbReference type="SMR" id="Q8FUA2"/>
<dbReference type="STRING" id="196164.gene:10740509"/>
<dbReference type="KEGG" id="cef:CE0119"/>
<dbReference type="eggNOG" id="COG2094">
    <property type="taxonomic scope" value="Bacteria"/>
</dbReference>
<dbReference type="HOGENOM" id="CLU_060471_3_1_11"/>
<dbReference type="OrthoDB" id="9794313at2"/>
<dbReference type="Proteomes" id="UP000001409">
    <property type="component" value="Chromosome"/>
</dbReference>
<dbReference type="GO" id="GO:0003905">
    <property type="term" value="F:alkylbase DNA N-glycosylase activity"/>
    <property type="evidence" value="ECO:0007669"/>
    <property type="project" value="InterPro"/>
</dbReference>
<dbReference type="GO" id="GO:0003677">
    <property type="term" value="F:DNA binding"/>
    <property type="evidence" value="ECO:0007669"/>
    <property type="project" value="InterPro"/>
</dbReference>
<dbReference type="GO" id="GO:0006284">
    <property type="term" value="P:base-excision repair"/>
    <property type="evidence" value="ECO:0007669"/>
    <property type="project" value="InterPro"/>
</dbReference>
<dbReference type="CDD" id="cd00540">
    <property type="entry name" value="AAG"/>
    <property type="match status" value="1"/>
</dbReference>
<dbReference type="Gene3D" id="3.10.300.10">
    <property type="entry name" value="Methylpurine-DNA glycosylase (MPG)"/>
    <property type="match status" value="1"/>
</dbReference>
<dbReference type="HAMAP" id="MF_00527">
    <property type="entry name" value="3MGH"/>
    <property type="match status" value="1"/>
</dbReference>
<dbReference type="InterPro" id="IPR011034">
    <property type="entry name" value="Formyl_transferase-like_C_sf"/>
</dbReference>
<dbReference type="InterPro" id="IPR003180">
    <property type="entry name" value="MPG"/>
</dbReference>
<dbReference type="InterPro" id="IPR036995">
    <property type="entry name" value="MPG_sf"/>
</dbReference>
<dbReference type="NCBIfam" id="TIGR00567">
    <property type="entry name" value="3mg"/>
    <property type="match status" value="1"/>
</dbReference>
<dbReference type="NCBIfam" id="NF002003">
    <property type="entry name" value="PRK00802.1-3"/>
    <property type="match status" value="1"/>
</dbReference>
<dbReference type="PANTHER" id="PTHR10429">
    <property type="entry name" value="DNA-3-METHYLADENINE GLYCOSYLASE"/>
    <property type="match status" value="1"/>
</dbReference>
<dbReference type="PANTHER" id="PTHR10429:SF0">
    <property type="entry name" value="DNA-3-METHYLADENINE GLYCOSYLASE"/>
    <property type="match status" value="1"/>
</dbReference>
<dbReference type="Pfam" id="PF02245">
    <property type="entry name" value="Pur_DNA_glyco"/>
    <property type="match status" value="1"/>
</dbReference>
<dbReference type="SUPFAM" id="SSF50486">
    <property type="entry name" value="FMT C-terminal domain-like"/>
    <property type="match status" value="1"/>
</dbReference>
<reference key="1">
    <citation type="journal article" date="2003" name="Genome Res.">
        <title>Comparative complete genome sequence analysis of the amino acid replacements responsible for the thermostability of Corynebacterium efficiens.</title>
        <authorList>
            <person name="Nishio Y."/>
            <person name="Nakamura Y."/>
            <person name="Kawarabayasi Y."/>
            <person name="Usuda Y."/>
            <person name="Kimura E."/>
            <person name="Sugimoto S."/>
            <person name="Matsui K."/>
            <person name="Yamagishi A."/>
            <person name="Kikuchi H."/>
            <person name="Ikeo K."/>
            <person name="Gojobori T."/>
        </authorList>
    </citation>
    <scope>NUCLEOTIDE SEQUENCE [LARGE SCALE GENOMIC DNA]</scope>
    <source>
        <strain>DSM 44549 / YS-314 / AJ 12310 / JCM 11189 / NBRC 100395</strain>
    </source>
</reference>
<organism>
    <name type="scientific">Corynebacterium efficiens (strain DSM 44549 / YS-314 / AJ 12310 / JCM 11189 / NBRC 100395)</name>
    <dbReference type="NCBI Taxonomy" id="196164"/>
    <lineage>
        <taxon>Bacteria</taxon>
        <taxon>Bacillati</taxon>
        <taxon>Actinomycetota</taxon>
        <taxon>Actinomycetes</taxon>
        <taxon>Mycobacteriales</taxon>
        <taxon>Corynebacteriaceae</taxon>
        <taxon>Corynebacterium</taxon>
    </lineage>
</organism>
<comment type="similarity">
    <text evidence="1">Belongs to the DNA glycosylase MPG family.</text>
</comment>
<comment type="sequence caution" evidence="2">
    <conflict type="erroneous initiation">
        <sequence resource="EMBL-CDS" id="BAC16929"/>
    </conflict>
</comment>
<name>3MGH_COREF</name>
<evidence type="ECO:0000255" key="1">
    <source>
        <dbReference type="HAMAP-Rule" id="MF_00527"/>
    </source>
</evidence>
<evidence type="ECO:0000305" key="2"/>
<sequence length="190" mass="20523">MPIDFLQPADIVAPQLLGCIFTHDGVSIRLTEVEAYLGAEDAAAHTHRGKTARNAAMFGPGGHMYIYISYGIHRAGNIACAPEGVGQGVLLRAGEVVAGEDIAYRRRGDVPFTRLAQGPGNLGQALNFQLSDNHAPINGTDFQLMEPSERPEWVSGPRVGITKNADAPLRFWIPGDPTVSVRRGRPKTRK</sequence>
<proteinExistence type="inferred from homology"/>
<accession>Q8FUA2</accession>
<feature type="chain" id="PRO_0000100082" description="Putative 3-methyladenine DNA glycosylase">
    <location>
        <begin position="1"/>
        <end position="190"/>
    </location>
</feature>
<keyword id="KW-0227">DNA damage</keyword>
<keyword id="KW-0234">DNA repair</keyword>
<keyword id="KW-0378">Hydrolase</keyword>
<keyword id="KW-1185">Reference proteome</keyword>